<evidence type="ECO:0000250" key="1">
    <source>
        <dbReference type="UniProtKB" id="P30414"/>
    </source>
</evidence>
<evidence type="ECO:0000255" key="2">
    <source>
        <dbReference type="PROSITE-ProRule" id="PRU00156"/>
    </source>
</evidence>
<evidence type="ECO:0000256" key="3">
    <source>
        <dbReference type="SAM" id="MobiDB-lite"/>
    </source>
</evidence>
<evidence type="ECO:0000305" key="4"/>
<evidence type="ECO:0000312" key="5">
    <source>
        <dbReference type="MGI" id="MGI:97346"/>
    </source>
</evidence>
<evidence type="ECO:0007744" key="6">
    <source>
    </source>
</evidence>
<name>NKTR_MOUSE</name>
<comment type="function">
    <text evidence="1">PPIase that catalyzes the cis-trans isomerization of proline imidic peptide bonds in oligopeptides and may therefore assist protein folding. Component of a putative tumor-recognition complex involved in the function of NK cells.</text>
</comment>
<comment type="catalytic activity">
    <reaction evidence="1">
        <text>[protein]-peptidylproline (omega=180) = [protein]-peptidylproline (omega=0)</text>
        <dbReference type="Rhea" id="RHEA:16237"/>
        <dbReference type="Rhea" id="RHEA-COMP:10747"/>
        <dbReference type="Rhea" id="RHEA-COMP:10748"/>
        <dbReference type="ChEBI" id="CHEBI:83833"/>
        <dbReference type="ChEBI" id="CHEBI:83834"/>
        <dbReference type="EC" id="5.2.1.8"/>
    </reaction>
</comment>
<comment type="activity regulation">
    <text evidence="1">Inhibited by cyclosporin A (CsA).</text>
</comment>
<comment type="subcellular location">
    <subcellularLocation>
        <location evidence="1">Cell membrane</location>
    </subcellularLocation>
</comment>
<comment type="sequence caution" evidence="4">
    <conflict type="erroneous initiation">
        <sequence resource="EMBL-CDS" id="AAA37500"/>
    </conflict>
    <text>Extended N-terminus.</text>
</comment>
<reference key="1">
    <citation type="journal article" date="1993" name="Proc. Natl. Acad. Sci. U.S.A.">
        <title>A cyclophilin-related protein involved in the function of natural killer cells.</title>
        <authorList>
            <person name="Anderson S.K."/>
            <person name="Gallinger S."/>
            <person name="Roder J."/>
            <person name="Frey J."/>
            <person name="Young H.A."/>
            <person name="Ortaldo J.R."/>
        </authorList>
    </citation>
    <scope>NUCLEOTIDE SEQUENCE [MRNA]</scope>
</reference>
<reference key="2">
    <citation type="journal article" date="2005" name="Science">
        <title>The transcriptional landscape of the mammalian genome.</title>
        <authorList>
            <person name="Carninci P."/>
            <person name="Kasukawa T."/>
            <person name="Katayama S."/>
            <person name="Gough J."/>
            <person name="Frith M.C."/>
            <person name="Maeda N."/>
            <person name="Oyama R."/>
            <person name="Ravasi T."/>
            <person name="Lenhard B."/>
            <person name="Wells C."/>
            <person name="Kodzius R."/>
            <person name="Shimokawa K."/>
            <person name="Bajic V.B."/>
            <person name="Brenner S.E."/>
            <person name="Batalov S."/>
            <person name="Forrest A.R."/>
            <person name="Zavolan M."/>
            <person name="Davis M.J."/>
            <person name="Wilming L.G."/>
            <person name="Aidinis V."/>
            <person name="Allen J.E."/>
            <person name="Ambesi-Impiombato A."/>
            <person name="Apweiler R."/>
            <person name="Aturaliya R.N."/>
            <person name="Bailey T.L."/>
            <person name="Bansal M."/>
            <person name="Baxter L."/>
            <person name="Beisel K.W."/>
            <person name="Bersano T."/>
            <person name="Bono H."/>
            <person name="Chalk A.M."/>
            <person name="Chiu K.P."/>
            <person name="Choudhary V."/>
            <person name="Christoffels A."/>
            <person name="Clutterbuck D.R."/>
            <person name="Crowe M.L."/>
            <person name="Dalla E."/>
            <person name="Dalrymple B.P."/>
            <person name="de Bono B."/>
            <person name="Della Gatta G."/>
            <person name="di Bernardo D."/>
            <person name="Down T."/>
            <person name="Engstrom P."/>
            <person name="Fagiolini M."/>
            <person name="Faulkner G."/>
            <person name="Fletcher C.F."/>
            <person name="Fukushima T."/>
            <person name="Furuno M."/>
            <person name="Futaki S."/>
            <person name="Gariboldi M."/>
            <person name="Georgii-Hemming P."/>
            <person name="Gingeras T.R."/>
            <person name="Gojobori T."/>
            <person name="Green R.E."/>
            <person name="Gustincich S."/>
            <person name="Harbers M."/>
            <person name="Hayashi Y."/>
            <person name="Hensch T.K."/>
            <person name="Hirokawa N."/>
            <person name="Hill D."/>
            <person name="Huminiecki L."/>
            <person name="Iacono M."/>
            <person name="Ikeo K."/>
            <person name="Iwama A."/>
            <person name="Ishikawa T."/>
            <person name="Jakt M."/>
            <person name="Kanapin A."/>
            <person name="Katoh M."/>
            <person name="Kawasawa Y."/>
            <person name="Kelso J."/>
            <person name="Kitamura H."/>
            <person name="Kitano H."/>
            <person name="Kollias G."/>
            <person name="Krishnan S.P."/>
            <person name="Kruger A."/>
            <person name="Kummerfeld S.K."/>
            <person name="Kurochkin I.V."/>
            <person name="Lareau L.F."/>
            <person name="Lazarevic D."/>
            <person name="Lipovich L."/>
            <person name="Liu J."/>
            <person name="Liuni S."/>
            <person name="McWilliam S."/>
            <person name="Madan Babu M."/>
            <person name="Madera M."/>
            <person name="Marchionni L."/>
            <person name="Matsuda H."/>
            <person name="Matsuzawa S."/>
            <person name="Miki H."/>
            <person name="Mignone F."/>
            <person name="Miyake S."/>
            <person name="Morris K."/>
            <person name="Mottagui-Tabar S."/>
            <person name="Mulder N."/>
            <person name="Nakano N."/>
            <person name="Nakauchi H."/>
            <person name="Ng P."/>
            <person name="Nilsson R."/>
            <person name="Nishiguchi S."/>
            <person name="Nishikawa S."/>
            <person name="Nori F."/>
            <person name="Ohara O."/>
            <person name="Okazaki Y."/>
            <person name="Orlando V."/>
            <person name="Pang K.C."/>
            <person name="Pavan W.J."/>
            <person name="Pavesi G."/>
            <person name="Pesole G."/>
            <person name="Petrovsky N."/>
            <person name="Piazza S."/>
            <person name="Reed J."/>
            <person name="Reid J.F."/>
            <person name="Ring B.Z."/>
            <person name="Ringwald M."/>
            <person name="Rost B."/>
            <person name="Ruan Y."/>
            <person name="Salzberg S.L."/>
            <person name="Sandelin A."/>
            <person name="Schneider C."/>
            <person name="Schoenbach C."/>
            <person name="Sekiguchi K."/>
            <person name="Semple C.A."/>
            <person name="Seno S."/>
            <person name="Sessa L."/>
            <person name="Sheng Y."/>
            <person name="Shibata Y."/>
            <person name="Shimada H."/>
            <person name="Shimada K."/>
            <person name="Silva D."/>
            <person name="Sinclair B."/>
            <person name="Sperling S."/>
            <person name="Stupka E."/>
            <person name="Sugiura K."/>
            <person name="Sultana R."/>
            <person name="Takenaka Y."/>
            <person name="Taki K."/>
            <person name="Tammoja K."/>
            <person name="Tan S.L."/>
            <person name="Tang S."/>
            <person name="Taylor M.S."/>
            <person name="Tegner J."/>
            <person name="Teichmann S.A."/>
            <person name="Ueda H.R."/>
            <person name="van Nimwegen E."/>
            <person name="Verardo R."/>
            <person name="Wei C.L."/>
            <person name="Yagi K."/>
            <person name="Yamanishi H."/>
            <person name="Zabarovsky E."/>
            <person name="Zhu S."/>
            <person name="Zimmer A."/>
            <person name="Hide W."/>
            <person name="Bult C."/>
            <person name="Grimmond S.M."/>
            <person name="Teasdale R.D."/>
            <person name="Liu E.T."/>
            <person name="Brusic V."/>
            <person name="Quackenbush J."/>
            <person name="Wahlestedt C."/>
            <person name="Mattick J.S."/>
            <person name="Hume D.A."/>
            <person name="Kai C."/>
            <person name="Sasaki D."/>
            <person name="Tomaru Y."/>
            <person name="Fukuda S."/>
            <person name="Kanamori-Katayama M."/>
            <person name="Suzuki M."/>
            <person name="Aoki J."/>
            <person name="Arakawa T."/>
            <person name="Iida J."/>
            <person name="Imamura K."/>
            <person name="Itoh M."/>
            <person name="Kato T."/>
            <person name="Kawaji H."/>
            <person name="Kawagashira N."/>
            <person name="Kawashima T."/>
            <person name="Kojima M."/>
            <person name="Kondo S."/>
            <person name="Konno H."/>
            <person name="Nakano K."/>
            <person name="Ninomiya N."/>
            <person name="Nishio T."/>
            <person name="Okada M."/>
            <person name="Plessy C."/>
            <person name="Shibata K."/>
            <person name="Shiraki T."/>
            <person name="Suzuki S."/>
            <person name="Tagami M."/>
            <person name="Waki K."/>
            <person name="Watahiki A."/>
            <person name="Okamura-Oho Y."/>
            <person name="Suzuki H."/>
            <person name="Kawai J."/>
            <person name="Hayashizaki Y."/>
        </authorList>
    </citation>
    <scope>NUCLEOTIDE SEQUENCE [LARGE SCALE MRNA]</scope>
</reference>
<reference key="3">
    <citation type="journal article" date="2009" name="PLoS Biol.">
        <title>Lineage-specific biology revealed by a finished genome assembly of the mouse.</title>
        <authorList>
            <person name="Church D.M."/>
            <person name="Goodstadt L."/>
            <person name="Hillier L.W."/>
            <person name="Zody M.C."/>
            <person name="Goldstein S."/>
            <person name="She X."/>
            <person name="Bult C.J."/>
            <person name="Agarwala R."/>
            <person name="Cherry J.L."/>
            <person name="DiCuccio M."/>
            <person name="Hlavina W."/>
            <person name="Kapustin Y."/>
            <person name="Meric P."/>
            <person name="Maglott D."/>
            <person name="Birtle Z."/>
            <person name="Marques A.C."/>
            <person name="Graves T."/>
            <person name="Zhou S."/>
            <person name="Teague B."/>
            <person name="Potamousis K."/>
            <person name="Churas C."/>
            <person name="Place M."/>
            <person name="Herschleb J."/>
            <person name="Runnheim R."/>
            <person name="Forrest D."/>
            <person name="Amos-Landgraf J."/>
            <person name="Schwartz D.C."/>
            <person name="Cheng Z."/>
            <person name="Lindblad-Toh K."/>
            <person name="Eichler E.E."/>
            <person name="Ponting C.P."/>
        </authorList>
    </citation>
    <scope>NUCLEOTIDE SEQUENCE [LARGE SCALE GENOMIC DNA]</scope>
    <source>
        <strain>C57BL/6J</strain>
    </source>
</reference>
<reference key="4">
    <citation type="submission" date="1999-10" db="EMBL/GenBank/DDBJ databases">
        <authorList>
            <person name="Anderson S.K."/>
        </authorList>
    </citation>
    <scope>SEQUENCE REVISION TO C-TERMINUS</scope>
    <source>
        <strain>BALB/cJ</strain>
        <tissue>Blood</tissue>
    </source>
</reference>
<reference key="5">
    <citation type="submission" date="2007-04" db="UniProtKB">
        <authorList>
            <person name="Lubec G."/>
            <person name="Kang S.U."/>
        </authorList>
    </citation>
    <scope>PROTEIN SEQUENCE OF 470-476; 537-544; 709-716 AND 1445-1451</scope>
    <scope>IDENTIFICATION BY MASS SPECTROMETRY</scope>
    <source>
        <strain>C57BL/6J</strain>
        <tissue>Brain</tissue>
    </source>
</reference>
<reference key="6">
    <citation type="journal article" date="2010" name="Cell">
        <title>A tissue-specific atlas of mouse protein phosphorylation and expression.</title>
        <authorList>
            <person name="Huttlin E.L."/>
            <person name="Jedrychowski M.P."/>
            <person name="Elias J.E."/>
            <person name="Goswami T."/>
            <person name="Rad R."/>
            <person name="Beausoleil S.A."/>
            <person name="Villen J."/>
            <person name="Haas W."/>
            <person name="Sowa M.E."/>
            <person name="Gygi S.P."/>
        </authorList>
    </citation>
    <scope>PHOSPHORYLATION [LARGE SCALE ANALYSIS] AT SER-611; SER-900 AND SER-1148</scope>
    <scope>IDENTIFICATION BY MASS SPECTROMETRY [LARGE SCALE ANALYSIS]</scope>
    <source>
        <tissue>Lung</tissue>
        <tissue>Spleen</tissue>
        <tissue>Testis</tissue>
    </source>
</reference>
<feature type="chain" id="PRO_0000064218" description="NK-tumor recognition protein">
    <location>
        <begin position="1"/>
        <end position="1453"/>
    </location>
</feature>
<feature type="domain" description="PPIase cyclophilin-type" evidence="2">
    <location>
        <begin position="10"/>
        <end position="175"/>
    </location>
</feature>
<feature type="region of interest" description="Disordered" evidence="3">
    <location>
        <begin position="187"/>
        <end position="625"/>
    </location>
</feature>
<feature type="region of interest" description="Disordered" evidence="3">
    <location>
        <begin position="651"/>
        <end position="1453"/>
    </location>
</feature>
<feature type="region of interest" description="Arg/Ser tandem repeat-rich">
    <location>
        <begin position="1303"/>
        <end position="1453"/>
    </location>
</feature>
<feature type="compositionally biased region" description="Low complexity" evidence="3">
    <location>
        <begin position="195"/>
        <end position="213"/>
    </location>
</feature>
<feature type="compositionally biased region" description="Basic residues" evidence="3">
    <location>
        <begin position="221"/>
        <end position="240"/>
    </location>
</feature>
<feature type="compositionally biased region" description="Basic and acidic residues" evidence="3">
    <location>
        <begin position="259"/>
        <end position="286"/>
    </location>
</feature>
<feature type="compositionally biased region" description="Basic residues" evidence="3">
    <location>
        <begin position="329"/>
        <end position="348"/>
    </location>
</feature>
<feature type="compositionally biased region" description="Basic and acidic residues" evidence="3">
    <location>
        <begin position="382"/>
        <end position="402"/>
    </location>
</feature>
<feature type="compositionally biased region" description="Polar residues" evidence="3">
    <location>
        <begin position="403"/>
        <end position="421"/>
    </location>
</feature>
<feature type="compositionally biased region" description="Basic residues" evidence="3">
    <location>
        <begin position="425"/>
        <end position="460"/>
    </location>
</feature>
<feature type="compositionally biased region" description="Basic and acidic residues" evidence="3">
    <location>
        <begin position="514"/>
        <end position="531"/>
    </location>
</feature>
<feature type="compositionally biased region" description="Low complexity" evidence="3">
    <location>
        <begin position="532"/>
        <end position="546"/>
    </location>
</feature>
<feature type="compositionally biased region" description="Low complexity" evidence="3">
    <location>
        <begin position="554"/>
        <end position="565"/>
    </location>
</feature>
<feature type="compositionally biased region" description="Polar residues" evidence="3">
    <location>
        <begin position="651"/>
        <end position="661"/>
    </location>
</feature>
<feature type="compositionally biased region" description="Low complexity" evidence="3">
    <location>
        <begin position="682"/>
        <end position="726"/>
    </location>
</feature>
<feature type="compositionally biased region" description="Low complexity" evidence="3">
    <location>
        <begin position="736"/>
        <end position="749"/>
    </location>
</feature>
<feature type="compositionally biased region" description="Basic residues" evidence="3">
    <location>
        <begin position="755"/>
        <end position="772"/>
    </location>
</feature>
<feature type="compositionally biased region" description="Basic and acidic residues" evidence="3">
    <location>
        <begin position="773"/>
        <end position="789"/>
    </location>
</feature>
<feature type="compositionally biased region" description="Low complexity" evidence="3">
    <location>
        <begin position="799"/>
        <end position="809"/>
    </location>
</feature>
<feature type="compositionally biased region" description="Basic and acidic residues" evidence="3">
    <location>
        <begin position="820"/>
        <end position="852"/>
    </location>
</feature>
<feature type="compositionally biased region" description="Basic and acidic residues" evidence="3">
    <location>
        <begin position="859"/>
        <end position="868"/>
    </location>
</feature>
<feature type="compositionally biased region" description="Basic and acidic residues" evidence="3">
    <location>
        <begin position="887"/>
        <end position="902"/>
    </location>
</feature>
<feature type="compositionally biased region" description="Acidic residues" evidence="3">
    <location>
        <begin position="903"/>
        <end position="913"/>
    </location>
</feature>
<feature type="compositionally biased region" description="Low complexity" evidence="3">
    <location>
        <begin position="948"/>
        <end position="958"/>
    </location>
</feature>
<feature type="compositionally biased region" description="Basic and acidic residues" evidence="3">
    <location>
        <begin position="966"/>
        <end position="982"/>
    </location>
</feature>
<feature type="compositionally biased region" description="Basic residues" evidence="3">
    <location>
        <begin position="983"/>
        <end position="1005"/>
    </location>
</feature>
<feature type="compositionally biased region" description="Basic and acidic residues" evidence="3">
    <location>
        <begin position="1030"/>
        <end position="1045"/>
    </location>
</feature>
<feature type="compositionally biased region" description="Polar residues" evidence="3">
    <location>
        <begin position="1170"/>
        <end position="1180"/>
    </location>
</feature>
<feature type="compositionally biased region" description="Low complexity" evidence="3">
    <location>
        <begin position="1189"/>
        <end position="1199"/>
    </location>
</feature>
<feature type="compositionally biased region" description="Low complexity" evidence="3">
    <location>
        <begin position="1322"/>
        <end position="1346"/>
    </location>
</feature>
<feature type="compositionally biased region" description="Basic residues" evidence="3">
    <location>
        <begin position="1369"/>
        <end position="1379"/>
    </location>
</feature>
<feature type="compositionally biased region" description="Low complexity" evidence="3">
    <location>
        <begin position="1380"/>
        <end position="1401"/>
    </location>
</feature>
<feature type="compositionally biased region" description="Basic residues" evidence="3">
    <location>
        <begin position="1416"/>
        <end position="1426"/>
    </location>
</feature>
<feature type="modified residue" description="Phosphoserine" evidence="1">
    <location>
        <position position="379"/>
    </location>
</feature>
<feature type="modified residue" description="Phosphoserine" evidence="1">
    <location>
        <position position="401"/>
    </location>
</feature>
<feature type="modified residue" description="Phosphoserine" evidence="1">
    <location>
        <position position="416"/>
    </location>
</feature>
<feature type="modified residue" description="Phosphoserine" evidence="6">
    <location>
        <position position="611"/>
    </location>
</feature>
<feature type="modified residue" description="Phosphoserine" evidence="1">
    <location>
        <position position="646"/>
    </location>
</feature>
<feature type="modified residue" description="Phosphoserine" evidence="1">
    <location>
        <position position="880"/>
    </location>
</feature>
<feature type="modified residue" description="Phosphoserine" evidence="1">
    <location>
        <position position="882"/>
    </location>
</feature>
<feature type="modified residue" description="Phosphoserine" evidence="1">
    <location>
        <position position="884"/>
    </location>
</feature>
<feature type="modified residue" description="Phosphoserine" evidence="6">
    <location>
        <position position="900"/>
    </location>
</feature>
<feature type="modified residue" description="Phosphoserine" evidence="1">
    <location>
        <position position="1139"/>
    </location>
</feature>
<feature type="modified residue" description="Phosphoserine" evidence="6">
    <location>
        <position position="1148"/>
    </location>
</feature>
<feature type="modified residue" description="Phosphoserine" evidence="1">
    <location>
        <position position="1195"/>
    </location>
</feature>
<feature type="cross-link" description="Glycyl lysine isopeptide (Lys-Gly) (interchain with G-Cter in SUMO2)" evidence="1">
    <location>
        <position position="323"/>
    </location>
</feature>
<feature type="cross-link" description="Glycyl lysine isopeptide (Lys-Gly) (interchain with G-Cter in SUMO2)" evidence="1">
    <location>
        <position position="576"/>
    </location>
</feature>
<feature type="cross-link" description="Glycyl lysine isopeptide (Lys-Gly) (interchain with G-Cter in SUMO2)" evidence="1">
    <location>
        <position position="579"/>
    </location>
</feature>
<feature type="cross-link" description="Glycyl lysine isopeptide (Lys-Gly) (interchain with G-Cter in SUMO2)" evidence="1">
    <location>
        <position position="637"/>
    </location>
</feature>
<feature type="cross-link" description="Glycyl lysine isopeptide (Lys-Gly) (interchain with G-Cter in SUMO2)" evidence="1">
    <location>
        <position position="654"/>
    </location>
</feature>
<feature type="cross-link" description="Glycyl lysine isopeptide (Lys-Gly) (interchain with G-Cter in SUMO2)" evidence="1">
    <location>
        <position position="664"/>
    </location>
</feature>
<feature type="cross-link" description="Glycyl lysine isopeptide (Lys-Gly) (interchain with G-Cter in SUMO2)" evidence="1">
    <location>
        <position position="1208"/>
    </location>
</feature>
<feature type="cross-link" description="Glycyl lysine isopeptide (Lys-Gly) (interchain with G-Cter in SUMO2)" evidence="1">
    <location>
        <position position="1249"/>
    </location>
</feature>
<feature type="sequence conflict" description="In Ref. 2; BAE25777." evidence="4" ref="2">
    <original>A</original>
    <variation>V</variation>
    <location>
        <position position="112"/>
    </location>
</feature>
<feature type="sequence conflict" description="In Ref. 2; BAE25777." evidence="4" ref="2">
    <original>K</original>
    <variation>Q</variation>
    <location>
        <position position="567"/>
    </location>
</feature>
<feature type="sequence conflict" description="In Ref. 2; BAE25777." evidence="4" ref="2">
    <original>E</original>
    <variation>G</variation>
    <location>
        <position position="601"/>
    </location>
</feature>
<feature type="sequence conflict" description="In Ref. 2; BAE25777." evidence="4" ref="2">
    <original>R</original>
    <variation>K</variation>
    <location>
        <position position="740"/>
    </location>
</feature>
<feature type="sequence conflict" description="In Ref. 1; AAA37500." evidence="4" ref="1">
    <original>S</original>
    <variation>T</variation>
    <location>
        <position position="806"/>
    </location>
</feature>
<feature type="sequence conflict" description="In Ref. 1; AAA37500." evidence="4" ref="1">
    <original>RTPK</original>
    <variation>ENSE</variation>
    <location>
        <begin position="856"/>
        <end position="859"/>
    </location>
</feature>
<feature type="sequence conflict" description="In Ref. 2; BAE25777." evidence="4" ref="2">
    <original>K</original>
    <variation>R</variation>
    <location>
        <position position="1203"/>
    </location>
</feature>
<accession>P30415</accession>
<accession>F8VPR8</accession>
<accession>Q3UNH0</accession>
<keyword id="KW-1003">Cell membrane</keyword>
<keyword id="KW-0903">Direct protein sequencing</keyword>
<keyword id="KW-0413">Isomerase</keyword>
<keyword id="KW-1017">Isopeptide bond</keyword>
<keyword id="KW-0472">Membrane</keyword>
<keyword id="KW-0597">Phosphoprotein</keyword>
<keyword id="KW-1185">Reference proteome</keyword>
<keyword id="KW-0677">Repeat</keyword>
<keyword id="KW-0697">Rotamase</keyword>
<keyword id="KW-0832">Ubl conjugation</keyword>
<proteinExistence type="evidence at protein level"/>
<sequence>MGAQDRPQCHFDIEINREPVGRIMFQLFSDICPKTCKNFLCLCSGEKGLGKTTGKKLCYKGSTFHRVVKNFMIQGGDFSEGNGKGGESIYGGYFKDENFILKHDRAFLLSMANRGKHTNGSQFFITTKPAPHLDGVHVVFGLVISGFEVIEQIENLKTDAASRPYADVRVIDCGVLATKLTKDVFEKKRKKPTCSEGSDSSSRSSSSSESSSESEVERETIRRRRHKRRPKVRHAKKRRKEMSSSEEPRRKRTVSPEGYSERSDVNEKRSVDSNTKREKPVVRPEEIPPVPENRFLLRRDMPAITVEPEQNIPDVAPVVSDQKPSVSKSGRKIKGRGTIRYHTPPRSRSHSESKDDDSSETPPHWKEEMQRLRAYRPPSGEKWSKGDKLSDPCSSRWDERSLSQRSRSWSYNGYYSDLSTARHSDGHHKKHRKEKKFKHKKKAKKQKHCRRHRQTKKRRIVMPDLEPSRSPTHRMKSSCVRERRSRASSSSSHHSSKRDWSKSDQDDGSASTHSSRDSYRSKSHSRSDSRGSSRSRAVSKSSSRSLNRSKSRSSSRSGPRRTSISPKKPAQLSENKPVKTEPLRPSVPQNGNVLVQPVAAENIPVIPLSDSPPPSRWKPGQKPWKPSYERIQEMKAKTTHLLPVQSTYSLTNIKATVSSSSYHKREKPSESDGSAYSKYSDRSSGSSGRSGSKSSRSRSSSRSYTRSRSRSLPTSRSLSRSPSSRSHSPNKYSDGSQHSRSSSYTSVSSDDGRRAMFRSNRKKSVTSHKRHRSNSEKTLHSKYVRGREKSSRHRKYSESRSSLDYSSDSDQSHVQVYSAPEKEKQGKVEALNDKQGKGREEGKPKPEWECPRSKKRTPKDHSRDDSVSKGKNCAGSKWDSESNSEQDVTKSRKSDPRRGSEKEEGEASSDSESEVGQSHIKAKPPAKPPTSTFLPGSDGAWKSRRPQSSASESESSCSNLGNIRGEPQKQKHSKDDLKGDHTKRAREKSKAKKDKKHKAPKRKQAFHWQPPLEFGDDEEEEMNGKQVTQDPKEKRHVSEKCEAVKDGIPNVEKTCDEGSSPSKPKKGTLEQDPLAEGGHDPSSCPAPLKVEDNTASSPPSAQHLEEHGPGGGEDVLQTDDNMEICTPDRTSPAKGEVVSPLANHRLDSPEVNIIPEQDECMAHPRAGGEQESSMSESKTLGESGVKQDSSTSVTSPVETSGKKEGAEKSQMNLTDKWKPLQGVGNLSVSTATTSSALDVKALSTVPEVKPQGLRIEIKSKNKVRPGSLFDEVRKTARLNRRPRNQESSSDDQTPSRDGDSQSRSPHRSRSKSETKSRHRTRSVSYSHSRSRSRSSTSSYRSRSYSRSRSRDWYSRGRTRSRSSSYGSFHSHRTSSRSRSRSSSYDLHSRSRSYTYDSYYSRSRSRSRSQRSDSYHRGRSYNRRSRSGRSYGSDSESDRSYSHHRSPSESSRYS</sequence>
<organism>
    <name type="scientific">Mus musculus</name>
    <name type="common">Mouse</name>
    <dbReference type="NCBI Taxonomy" id="10090"/>
    <lineage>
        <taxon>Eukaryota</taxon>
        <taxon>Metazoa</taxon>
        <taxon>Chordata</taxon>
        <taxon>Craniata</taxon>
        <taxon>Vertebrata</taxon>
        <taxon>Euteleostomi</taxon>
        <taxon>Mammalia</taxon>
        <taxon>Eutheria</taxon>
        <taxon>Euarchontoglires</taxon>
        <taxon>Glires</taxon>
        <taxon>Rodentia</taxon>
        <taxon>Myomorpha</taxon>
        <taxon>Muroidea</taxon>
        <taxon>Muridae</taxon>
        <taxon>Murinae</taxon>
        <taxon>Mus</taxon>
        <taxon>Mus</taxon>
    </lineage>
</organism>
<gene>
    <name evidence="5" type="primary">Nktr</name>
</gene>
<dbReference type="EC" id="5.2.1.8" evidence="1"/>
<dbReference type="EMBL" id="L04289">
    <property type="protein sequence ID" value="AAA37500.2"/>
    <property type="status" value="ALT_INIT"/>
    <property type="molecule type" value="mRNA"/>
</dbReference>
<dbReference type="EMBL" id="AK144214">
    <property type="protein sequence ID" value="BAE25777.1"/>
    <property type="molecule type" value="mRNA"/>
</dbReference>
<dbReference type="EMBL" id="AC159810">
    <property type="status" value="NOT_ANNOTATED_CDS"/>
    <property type="molecule type" value="Genomic_DNA"/>
</dbReference>
<dbReference type="EMBL" id="AC165080">
    <property type="status" value="NOT_ANNOTATED_CDS"/>
    <property type="molecule type" value="Genomic_DNA"/>
</dbReference>
<dbReference type="CCDS" id="CCDS23636.1"/>
<dbReference type="RefSeq" id="NP_035048.3">
    <property type="nucleotide sequence ID" value="NM_010918.3"/>
</dbReference>
<dbReference type="SMR" id="P30415"/>
<dbReference type="BioGRID" id="201775">
    <property type="interactions" value="3"/>
</dbReference>
<dbReference type="DIP" id="DIP-59972N"/>
<dbReference type="FunCoup" id="P30415">
    <property type="interactions" value="4557"/>
</dbReference>
<dbReference type="IntAct" id="P30415">
    <property type="interactions" value="2"/>
</dbReference>
<dbReference type="MINT" id="P30415"/>
<dbReference type="STRING" id="10090.ENSMUSP00000035112"/>
<dbReference type="GlyGen" id="P30415">
    <property type="glycosylation" value="1 site, 1 O-linked glycan (1 site)"/>
</dbReference>
<dbReference type="iPTMnet" id="P30415"/>
<dbReference type="PhosphoSitePlus" id="P30415"/>
<dbReference type="jPOST" id="P30415"/>
<dbReference type="PaxDb" id="10090-ENSMUSP00000035112"/>
<dbReference type="PeptideAtlas" id="P30415"/>
<dbReference type="ProteomicsDB" id="252900"/>
<dbReference type="Antibodypedia" id="12363">
    <property type="antibodies" value="95 antibodies from 22 providers"/>
</dbReference>
<dbReference type="DNASU" id="18087"/>
<dbReference type="Ensembl" id="ENSMUST00000035112.13">
    <property type="protein sequence ID" value="ENSMUSP00000035112.6"/>
    <property type="gene ID" value="ENSMUSG00000032525.16"/>
</dbReference>
<dbReference type="GeneID" id="18087"/>
<dbReference type="KEGG" id="mmu:18087"/>
<dbReference type="UCSC" id="uc009sdr.1">
    <property type="organism name" value="mouse"/>
</dbReference>
<dbReference type="AGR" id="MGI:97346"/>
<dbReference type="CTD" id="4820"/>
<dbReference type="MGI" id="MGI:97346">
    <property type="gene designation" value="Nktr"/>
</dbReference>
<dbReference type="VEuPathDB" id="HostDB:ENSMUSG00000032525"/>
<dbReference type="eggNOG" id="KOG0546">
    <property type="taxonomic scope" value="Eukaryota"/>
</dbReference>
<dbReference type="GeneTree" id="ENSGT00940000158548"/>
<dbReference type="InParanoid" id="P30415"/>
<dbReference type="OMA" id="NAKHTEP"/>
<dbReference type="OrthoDB" id="9909290at2759"/>
<dbReference type="TreeFam" id="TF318563"/>
<dbReference type="BioGRID-ORCS" id="18087">
    <property type="hits" value="8 hits in 79 CRISPR screens"/>
</dbReference>
<dbReference type="ChiTaRS" id="Nktr">
    <property type="organism name" value="mouse"/>
</dbReference>
<dbReference type="PRO" id="PR:P30415"/>
<dbReference type="Proteomes" id="UP000000589">
    <property type="component" value="Chromosome 9"/>
</dbReference>
<dbReference type="RNAct" id="P30415">
    <property type="molecule type" value="protein"/>
</dbReference>
<dbReference type="Bgee" id="ENSMUSG00000032525">
    <property type="expression patterns" value="Expressed in ascending aorta and 254 other cell types or tissues"/>
</dbReference>
<dbReference type="ExpressionAtlas" id="P30415">
    <property type="expression patterns" value="baseline and differential"/>
</dbReference>
<dbReference type="GO" id="GO:0005886">
    <property type="term" value="C:plasma membrane"/>
    <property type="evidence" value="ECO:0007669"/>
    <property type="project" value="UniProtKB-SubCell"/>
</dbReference>
<dbReference type="GO" id="GO:0003755">
    <property type="term" value="F:peptidyl-prolyl cis-trans isomerase activity"/>
    <property type="evidence" value="ECO:0000250"/>
    <property type="project" value="UniProtKB"/>
</dbReference>
<dbReference type="GO" id="GO:0006457">
    <property type="term" value="P:protein folding"/>
    <property type="evidence" value="ECO:0007669"/>
    <property type="project" value="InterPro"/>
</dbReference>
<dbReference type="FunFam" id="2.40.100.10:FF:000005">
    <property type="entry name" value="Peptidyl-prolyl cis-trans isomerase G"/>
    <property type="match status" value="1"/>
</dbReference>
<dbReference type="Gene3D" id="2.40.100.10">
    <property type="entry name" value="Cyclophilin-like"/>
    <property type="match status" value="1"/>
</dbReference>
<dbReference type="InterPro" id="IPR029000">
    <property type="entry name" value="Cyclophilin-like_dom_sf"/>
</dbReference>
<dbReference type="InterPro" id="IPR020892">
    <property type="entry name" value="Cyclophilin-type_PPIase_CS"/>
</dbReference>
<dbReference type="InterPro" id="IPR002130">
    <property type="entry name" value="Cyclophilin-type_PPIase_dom"/>
</dbReference>
<dbReference type="PANTHER" id="PTHR11071:SF257">
    <property type="entry name" value="NK-TUMOR RECOGNITION PROTEIN"/>
    <property type="match status" value="1"/>
</dbReference>
<dbReference type="PANTHER" id="PTHR11071">
    <property type="entry name" value="PEPTIDYL-PROLYL CIS-TRANS ISOMERASE"/>
    <property type="match status" value="1"/>
</dbReference>
<dbReference type="Pfam" id="PF00160">
    <property type="entry name" value="Pro_isomerase"/>
    <property type="match status" value="1"/>
</dbReference>
<dbReference type="PRINTS" id="PR00153">
    <property type="entry name" value="CSAPPISMRASE"/>
</dbReference>
<dbReference type="SUPFAM" id="SSF50891">
    <property type="entry name" value="Cyclophilin-like"/>
    <property type="match status" value="1"/>
</dbReference>
<dbReference type="PROSITE" id="PS00170">
    <property type="entry name" value="CSA_PPIASE_1"/>
    <property type="match status" value="1"/>
</dbReference>
<dbReference type="PROSITE" id="PS50072">
    <property type="entry name" value="CSA_PPIASE_2"/>
    <property type="match status" value="1"/>
</dbReference>
<protein>
    <recommendedName>
        <fullName evidence="4">NK-tumor recognition protein</fullName>
        <shortName evidence="4">NK-TR protein</shortName>
    </recommendedName>
    <alternativeName>
        <fullName>Natural-killer cells cyclophilin-related protein</fullName>
    </alternativeName>
    <alternativeName>
        <fullName evidence="1">Peptidyl-prolyl cis-trans isomerase NKTR</fullName>
        <shortName evidence="1">PPIase</shortName>
        <ecNumber evidence="1">5.2.1.8</ecNumber>
    </alternativeName>
</protein>